<keyword id="KW-0153">Cholesterol metabolism</keyword>
<keyword id="KW-0256">Endoplasmic reticulum</keyword>
<keyword id="KW-0443">Lipid metabolism</keyword>
<keyword id="KW-0446">Lipid-binding</keyword>
<keyword id="KW-0472">Membrane</keyword>
<keyword id="KW-0558">Oxidation</keyword>
<keyword id="KW-0597">Phosphoprotein</keyword>
<keyword id="KW-1185">Reference proteome</keyword>
<keyword id="KW-0753">Steroid metabolism</keyword>
<keyword id="KW-1207">Sterol metabolism</keyword>
<keyword id="KW-0882">Thioester bond</keyword>
<keyword id="KW-0812">Transmembrane</keyword>
<keyword id="KW-1133">Transmembrane helix</keyword>
<keyword id="KW-0832">Ubl conjugation</keyword>
<accession>A9RA88</accession>
<evidence type="ECO:0000250" key="1">
    <source>
        <dbReference type="UniProtKB" id="A1T557"/>
    </source>
</evidence>
<evidence type="ECO:0000250" key="2">
    <source>
        <dbReference type="UniProtKB" id="Q9Y5U4"/>
    </source>
</evidence>
<evidence type="ECO:0000305" key="3"/>
<reference key="1">
    <citation type="submission" date="2007-12" db="EMBL/GenBank/DDBJ databases">
        <title>NISC comparative sequencing initiative.</title>
        <authorList>
            <person name="Antonellis A."/>
            <person name="Benjamin B."/>
            <person name="Blakesley R.W."/>
            <person name="Bouffard G.G."/>
            <person name="Brinkley C."/>
            <person name="Brooks S."/>
            <person name="Chu G."/>
            <person name="Chub I."/>
            <person name="Coleman H."/>
            <person name="Fuksenko T."/>
            <person name="Gestole M."/>
            <person name="Gregory M."/>
            <person name="Guan X."/>
            <person name="Gupta J."/>
            <person name="Gurson N."/>
            <person name="Han E."/>
            <person name="Han J."/>
            <person name="Hansen N."/>
            <person name="Hargrove A."/>
            <person name="Hines-Harris K."/>
            <person name="Ho S.-L."/>
            <person name="Hu P."/>
            <person name="Hunter G."/>
            <person name="Hurle B."/>
            <person name="Idol J.R."/>
            <person name="Johnson T."/>
            <person name="Knight E."/>
            <person name="Kwong P."/>
            <person name="Lee-Lin S.-Q."/>
            <person name="Legaspi R."/>
            <person name="Madden M."/>
            <person name="Maduro Q.L."/>
            <person name="Maduro V.B."/>
            <person name="Margulies E.H."/>
            <person name="Masiello C."/>
            <person name="Maskeri B."/>
            <person name="McDowell J."/>
            <person name="Merkulov G."/>
            <person name="Montemayor C."/>
            <person name="Mullikin J.C."/>
            <person name="Park M."/>
            <person name="Prasad A."/>
            <person name="Ramsahoye C."/>
            <person name="Reddix-Dugue N."/>
            <person name="Riebow N."/>
            <person name="Schandler K."/>
            <person name="Schueler M.G."/>
            <person name="Sison C."/>
            <person name="Smith L."/>
            <person name="Stantripop S."/>
            <person name="Thomas J.W."/>
            <person name="Thomas P.J."/>
            <person name="Tsipouri V."/>
            <person name="Young A."/>
            <person name="Green E.D."/>
        </authorList>
    </citation>
    <scope>NUCLEOTIDE SEQUENCE [LARGE SCALE GENOMIC DNA]</scope>
</reference>
<protein>
    <recommendedName>
        <fullName evidence="2">Insulin-induced gene 2 protein</fullName>
        <shortName evidence="2">INSIG-2</shortName>
    </recommendedName>
</protein>
<comment type="function">
    <text evidence="2">Oxysterol-binding protein that mediates feedback control of cholesterol synthesis by controlling both endoplasmic reticulum to Golgi transport of SCAP and degradation of HMGCR. Acts as a negative regulator of cholesterol biosynthesis by mediating the retention of the SCAP-SREBP complex in the endoplasmic reticulum, thereby blocking the processing of sterol regulatory element-binding proteins (SREBPs) SREBF1/SREBP1 and SREBF2/SREBP2. Binds oxysterol, including 22-hydroxycholesterol, 24-hydroxycholesterol, 25-hydroxycholesterol and 27-hydroxycholesterol, regulating interaction with SCAP and retention of the SCAP-SREBP complex in the endoplasmic reticulum. In presence of oxysterol, interacts with SCAP, retaining the SCAP-SREBP complex in the endoplasmic reticulum, thereby preventing SCAP from escorting SREBF1/SREBP1 and SREBF2/SREBP2 to the Golgi. Sterol deprivation or phosphorylation by PCK1 reduce oxysterol-binding, disrupting the interaction between INSIG2 and SCAP, thereby promoting Golgi transport of the SCAP-SREBP complex, followed by processing and nuclear translocation of SREBF1/SREBP1 and SREBF2/SREBP2. Also regulates cholesterol synthesis by regulating degradation of HMGCR: initiates the sterol-mediated ubiquitin-mediated endoplasmic reticulum-associated degradation (ERAD) of HMGCR via recruitment of the reductase to the ubiquitin ligase RNF139.</text>
</comment>
<comment type="subunit">
    <text evidence="2">Interacts with SCAP; interaction is direct and only takes place in the presence of sterols; it prevents interaction between SCAP and the coat protein complex II (COPII). Associates with the SCAP-SREBP complex (composed of SCAP and SREBF1/SREBP1 or SREBF2/SREBP2); association is mediated via its interaction with SCAP and only takes place in the presence of sterols. Interacts with RNF139. Interacts with RNF145.</text>
</comment>
<comment type="subcellular location">
    <subcellularLocation>
        <location evidence="2">Endoplasmic reticulum membrane</location>
        <topology evidence="2">Multi-pass membrane protein</topology>
    </subcellularLocation>
</comment>
<comment type="domain">
    <text evidence="2">Binds oxysterols in a pocket within their transmembrane domains and interacts with SCAP via transmembrane domains 3 and 4.</text>
</comment>
<comment type="domain">
    <text evidence="2">The KxHxx motif mediates association with the coatomer complex.</text>
</comment>
<comment type="PTM">
    <text evidence="2">Phosphorylation at Ser-151 by PCK1 reduces binding to oxysterol, disrupting the interaction between INSIG2 and SCAP, thereby promoting nuclear translocation of SREBP proteins (SREBF1/SREBP1 or SREBF2/SREBP2) and subsequent transcription of downstream lipogenesis-related genes.</text>
</comment>
<comment type="PTM">
    <text evidence="2">Polyubiquitinated by AMFR/gp78 at Cys-215 in some tissues such as adipose tissues, undifferentiated myoblasts and liver, leading to its degradation. In differentiated myotubes, Cys-215 oxidation prevents ubiquitination at the same site, resulting in protein stabilization.</text>
</comment>
<comment type="PTM">
    <text evidence="2">Oxidized at Cys-215 in differentiated myotubes, preventing ubiquitination at the same site, and resulting in protein stabilization.</text>
</comment>
<comment type="similarity">
    <text evidence="3">Belongs to the INSIG family.</text>
</comment>
<sequence>MAEGETESPGPKKCGPYISSVTSQSVNLMIRGVVLFFIGVFLALVLNLLQIQRNVTLFPPDVIASIFSSAWWVPPCCGTASAVIGLLYPCIDRHLGEPHKFKREWSSVMRCVAVFVGINHASAKVDFDNNIQLSLTLAALSIGLWWTFDRSRSGFGLGVGIAFLATLVTQLLVYNGVYQYTSPDFLYVRSWLPCIFFAGGITMGNIGRQLAMYECKVIAEKSHQE</sequence>
<organism>
    <name type="scientific">Papio anubis</name>
    <name type="common">Olive baboon</name>
    <dbReference type="NCBI Taxonomy" id="9555"/>
    <lineage>
        <taxon>Eukaryota</taxon>
        <taxon>Metazoa</taxon>
        <taxon>Chordata</taxon>
        <taxon>Craniata</taxon>
        <taxon>Vertebrata</taxon>
        <taxon>Euteleostomi</taxon>
        <taxon>Mammalia</taxon>
        <taxon>Eutheria</taxon>
        <taxon>Euarchontoglires</taxon>
        <taxon>Primates</taxon>
        <taxon>Haplorrhini</taxon>
        <taxon>Catarrhini</taxon>
        <taxon>Cercopithecidae</taxon>
        <taxon>Cercopithecinae</taxon>
        <taxon>Papio</taxon>
    </lineage>
</organism>
<name>INSI2_PAPAN</name>
<feature type="chain" id="PRO_0000339170" description="Insulin-induced gene 2 protein">
    <location>
        <begin position="1"/>
        <end position="225"/>
    </location>
</feature>
<feature type="topological domain" description="Cytoplasmic" evidence="3">
    <location>
        <begin position="1"/>
        <end position="28"/>
    </location>
</feature>
<feature type="transmembrane region" description="Helical; Name=1" evidence="1">
    <location>
        <begin position="29"/>
        <end position="51"/>
    </location>
</feature>
<feature type="topological domain" description="Lumenal" evidence="3">
    <location>
        <begin position="52"/>
        <end position="70"/>
    </location>
</feature>
<feature type="transmembrane region" description="Helical; Name=2" evidence="1">
    <location>
        <begin position="71"/>
        <end position="88"/>
    </location>
</feature>
<feature type="topological domain" description="Cytoplasmic" evidence="3">
    <location>
        <begin position="89"/>
        <end position="103"/>
    </location>
</feature>
<feature type="transmembrane region" description="Helical; Name=3" evidence="1">
    <location>
        <begin position="104"/>
        <end position="126"/>
    </location>
</feature>
<feature type="topological domain" description="Lumenal" evidence="3">
    <location>
        <begin position="127"/>
        <end position="129"/>
    </location>
</feature>
<feature type="transmembrane region" description="Helical; Name=4" evidence="1">
    <location>
        <begin position="130"/>
        <end position="148"/>
    </location>
</feature>
<feature type="topological domain" description="Cytoplasmic" evidence="3">
    <location>
        <begin position="149"/>
        <end position="153"/>
    </location>
</feature>
<feature type="transmembrane region" description="Helical; Name=5" evidence="1">
    <location>
        <begin position="154"/>
        <end position="175"/>
    </location>
</feature>
<feature type="topological domain" description="Lumenal" evidence="3">
    <location>
        <begin position="176"/>
        <end position="189"/>
    </location>
</feature>
<feature type="transmembrane region" description="Helical; Name=6" evidence="1">
    <location>
        <begin position="190"/>
        <end position="207"/>
    </location>
</feature>
<feature type="topological domain" description="Cytoplasmic" evidence="3">
    <location>
        <begin position="208"/>
        <end position="225"/>
    </location>
</feature>
<feature type="short sequence motif" description="KxHxx" evidence="2">
    <location>
        <begin position="219"/>
        <end position="225"/>
    </location>
</feature>
<feature type="site" description="Required for the recognition of 25-hydroxycholesterol" evidence="2">
    <location>
        <position position="115"/>
    </location>
</feature>
<feature type="modified residue" description="Phosphoserine" evidence="2">
    <location>
        <position position="151"/>
    </location>
</feature>
<feature type="modified residue" description="Cysteine sulfenic acid (-SOH); alternate" evidence="2">
    <location>
        <position position="215"/>
    </location>
</feature>
<feature type="cross-link" description="Glycyl cysteine thioester (Cys-Gly) (interchain with G-Cter in ubiquitin); alternate" evidence="2">
    <location>
        <position position="215"/>
    </location>
</feature>
<gene>
    <name evidence="2" type="primary">INSIG2</name>
</gene>
<proteinExistence type="inferred from homology"/>
<dbReference type="EMBL" id="DP000513">
    <property type="protein sequence ID" value="ABX89270.1"/>
    <property type="molecule type" value="Genomic_DNA"/>
</dbReference>
<dbReference type="RefSeq" id="NP_001162382.1">
    <property type="nucleotide sequence ID" value="NM_001168911.1"/>
</dbReference>
<dbReference type="RefSeq" id="XP_009183295.1">
    <property type="nucleotide sequence ID" value="XM_009185031.4"/>
</dbReference>
<dbReference type="RefSeq" id="XP_009183297.1">
    <property type="nucleotide sequence ID" value="XM_009185033.4"/>
</dbReference>
<dbReference type="RefSeq" id="XP_009183298.1">
    <property type="nucleotide sequence ID" value="XM_009185034.3"/>
</dbReference>
<dbReference type="RefSeq" id="XP_021779082.1">
    <property type="nucleotide sequence ID" value="XM_021923390.2"/>
</dbReference>
<dbReference type="SMR" id="A9RA88"/>
<dbReference type="STRING" id="9555.ENSPANP00000004968"/>
<dbReference type="GeneID" id="100137376"/>
<dbReference type="KEGG" id="panu:100137376"/>
<dbReference type="CTD" id="51141"/>
<dbReference type="eggNOG" id="KOG4363">
    <property type="taxonomic scope" value="Eukaryota"/>
</dbReference>
<dbReference type="HOGENOM" id="CLU_092922_0_0_1"/>
<dbReference type="Proteomes" id="UP000028761">
    <property type="component" value="Chromosome 10"/>
</dbReference>
<dbReference type="Bgee" id="ENSPANG00000024543">
    <property type="expression patterns" value="Expressed in liver and 66 other cell types or tissues"/>
</dbReference>
<dbReference type="GO" id="GO:0032937">
    <property type="term" value="C:SREBP-SCAP-Insig complex"/>
    <property type="evidence" value="ECO:0007669"/>
    <property type="project" value="TreeGrafter"/>
</dbReference>
<dbReference type="GO" id="GO:0008142">
    <property type="term" value="F:oxysterol binding"/>
    <property type="evidence" value="ECO:0000250"/>
    <property type="project" value="UniProtKB"/>
</dbReference>
<dbReference type="GO" id="GO:0032869">
    <property type="term" value="P:cellular response to insulin stimulus"/>
    <property type="evidence" value="ECO:0007669"/>
    <property type="project" value="TreeGrafter"/>
</dbReference>
<dbReference type="GO" id="GO:0006695">
    <property type="term" value="P:cholesterol biosynthetic process"/>
    <property type="evidence" value="ECO:0000250"/>
    <property type="project" value="UniProtKB"/>
</dbReference>
<dbReference type="GO" id="GO:0032933">
    <property type="term" value="P:SREBP signaling pathway"/>
    <property type="evidence" value="ECO:0000250"/>
    <property type="project" value="UniProtKB"/>
</dbReference>
<dbReference type="GO" id="GO:0036316">
    <property type="term" value="P:SREBP-SCAP complex retention in endoplasmic reticulum"/>
    <property type="evidence" value="ECO:0000250"/>
    <property type="project" value="UniProtKB"/>
</dbReference>
<dbReference type="InterPro" id="IPR025929">
    <property type="entry name" value="INSIG_fam"/>
</dbReference>
<dbReference type="PANTHER" id="PTHR15301">
    <property type="entry name" value="INSULIN-INDUCED GENE 1"/>
    <property type="match status" value="1"/>
</dbReference>
<dbReference type="PANTHER" id="PTHR15301:SF10">
    <property type="entry name" value="INSULIN-INDUCED GENE 2 PROTEIN"/>
    <property type="match status" value="1"/>
</dbReference>
<dbReference type="Pfam" id="PF07281">
    <property type="entry name" value="INSIG"/>
    <property type="match status" value="1"/>
</dbReference>